<evidence type="ECO:0000255" key="1">
    <source>
        <dbReference type="HAMAP-Rule" id="MF_01416"/>
    </source>
</evidence>
<reference key="1">
    <citation type="submission" date="1996-07" db="EMBL/GenBank/DDBJ databases">
        <authorList>
            <person name="Huss V.A.R."/>
            <person name="Tietze A.C."/>
            <person name="Julius C."/>
        </authorList>
    </citation>
    <scope>NUCLEOTIDE SEQUENCE [GENOMIC DNA]</scope>
    <source>
        <strain>CCMP593 / OCHRO / Plymouth163</strain>
    </source>
</reference>
<organism>
    <name type="scientific">Ochrosphaera neapolitana</name>
    <dbReference type="NCBI Taxonomy" id="35137"/>
    <lineage>
        <taxon>Eukaryota</taxon>
        <taxon>Haptista</taxon>
        <taxon>Haptophyta</taxon>
        <taxon>Prymnesiophyceae</taxon>
        <taxon>Coccolithales</taxon>
        <taxon>Hymenomonadaceae</taxon>
        <taxon>Ochrosphaera</taxon>
    </lineage>
</organism>
<gene>
    <name evidence="1" type="primary">atpD</name>
</gene>
<comment type="function">
    <text evidence="1">F(1)F(0) ATP synthase produces ATP from ADP in the presence of a proton or sodium gradient. F-type ATPases consist of two structural domains, F(1) containing the extramembraneous catalytic core and F(0) containing the membrane proton channel, linked together by a central stalk and a peripheral stalk. During catalysis, ATP synthesis in the catalytic domain of F(1) is coupled via a rotary mechanism of the central stalk subunits to proton translocation.</text>
</comment>
<comment type="function">
    <text evidence="1">This protein is part of the stalk that links CF(0) to CF(1). It either transmits conformational changes from CF(0) to CF(1) or is implicated in proton conduction.</text>
</comment>
<comment type="subunit">
    <text evidence="1">F-type ATPases have 2 components, F(1) - the catalytic core - and F(0) - the membrane proton channel. F(1) has five subunits: alpha(3), beta(3), gamma(1), delta(1), epsilon(1). CF(0) has four main subunits: a(1), b(1), b'(1) and c(10-14). The alpha and beta chains form an alternating ring which encloses part of the gamma chain. F(1) is attached to F(0) by a central stalk formed by the gamma and epsilon chains, while a peripheral stalk is formed by the delta, b and b' chains.</text>
</comment>
<comment type="subcellular location">
    <subcellularLocation>
        <location evidence="1">Plastid</location>
        <location evidence="1">Chloroplast thylakoid membrane</location>
        <topology evidence="1">Peripheral membrane protein</topology>
    </subcellularLocation>
</comment>
<comment type="similarity">
    <text evidence="1">Belongs to the ATPase delta chain family.</text>
</comment>
<sequence length="179" mass="19558">MSVAKIADAYAEALLELANSNKSLKETTNDMNIVSQFLANSSDLKKFLGNPLITRERKKNVLKDVLGEQISSVSLNFLMLLVNRGRVAFLDKIAQKFLELSYKQDAIEIAKVTSSVALSAQQQKELAGKLKLITGAKKIKLALRVEPKLIGGFTVEIGSKLIDTSIRGQLKKISNLLGA</sequence>
<name>ATPD_OCHNE</name>
<proteinExistence type="inferred from homology"/>
<dbReference type="EMBL" id="X99078">
    <property type="protein sequence ID" value="CAA67539.1"/>
    <property type="molecule type" value="Genomic_DNA"/>
</dbReference>
<dbReference type="SMR" id="Q40610"/>
<dbReference type="GO" id="GO:0009535">
    <property type="term" value="C:chloroplast thylakoid membrane"/>
    <property type="evidence" value="ECO:0007669"/>
    <property type="project" value="UniProtKB-SubCell"/>
</dbReference>
<dbReference type="GO" id="GO:0045259">
    <property type="term" value="C:proton-transporting ATP synthase complex"/>
    <property type="evidence" value="ECO:0007669"/>
    <property type="project" value="UniProtKB-KW"/>
</dbReference>
<dbReference type="GO" id="GO:0046933">
    <property type="term" value="F:proton-transporting ATP synthase activity, rotational mechanism"/>
    <property type="evidence" value="ECO:0007669"/>
    <property type="project" value="UniProtKB-UniRule"/>
</dbReference>
<dbReference type="Gene3D" id="1.10.520.20">
    <property type="entry name" value="N-terminal domain of the delta subunit of the F1F0-ATP synthase"/>
    <property type="match status" value="1"/>
</dbReference>
<dbReference type="HAMAP" id="MF_01416">
    <property type="entry name" value="ATP_synth_delta_bact"/>
    <property type="match status" value="1"/>
</dbReference>
<dbReference type="InterPro" id="IPR026015">
    <property type="entry name" value="ATP_synth_OSCP/delta_N_sf"/>
</dbReference>
<dbReference type="InterPro" id="IPR020781">
    <property type="entry name" value="ATPase_OSCP/d_CS"/>
</dbReference>
<dbReference type="InterPro" id="IPR000711">
    <property type="entry name" value="ATPase_OSCP/dsu"/>
</dbReference>
<dbReference type="NCBIfam" id="TIGR01145">
    <property type="entry name" value="ATP_synt_delta"/>
    <property type="match status" value="1"/>
</dbReference>
<dbReference type="PANTHER" id="PTHR11910">
    <property type="entry name" value="ATP SYNTHASE DELTA CHAIN"/>
    <property type="match status" value="1"/>
</dbReference>
<dbReference type="Pfam" id="PF00213">
    <property type="entry name" value="OSCP"/>
    <property type="match status" value="1"/>
</dbReference>
<dbReference type="PRINTS" id="PR00125">
    <property type="entry name" value="ATPASEDELTA"/>
</dbReference>
<dbReference type="SUPFAM" id="SSF47928">
    <property type="entry name" value="N-terminal domain of the delta subunit of the F1F0-ATP synthase"/>
    <property type="match status" value="1"/>
</dbReference>
<dbReference type="PROSITE" id="PS00389">
    <property type="entry name" value="ATPASE_DELTA"/>
    <property type="match status" value="1"/>
</dbReference>
<keyword id="KW-0066">ATP synthesis</keyword>
<keyword id="KW-0139">CF(1)</keyword>
<keyword id="KW-0150">Chloroplast</keyword>
<keyword id="KW-0375">Hydrogen ion transport</keyword>
<keyword id="KW-0406">Ion transport</keyword>
<keyword id="KW-0472">Membrane</keyword>
<keyword id="KW-0934">Plastid</keyword>
<keyword id="KW-0793">Thylakoid</keyword>
<keyword id="KW-0813">Transport</keyword>
<geneLocation type="chloroplast"/>
<accession>Q40610</accession>
<protein>
    <recommendedName>
        <fullName evidence="1">ATP synthase subunit delta, chloroplastic</fullName>
    </recommendedName>
    <alternativeName>
        <fullName evidence="1">ATP synthase F(1) sector subunit delta</fullName>
    </alternativeName>
    <alternativeName>
        <fullName evidence="1">F-type ATPase subunit delta</fullName>
    </alternativeName>
</protein>
<feature type="chain" id="PRO_0000193503" description="ATP synthase subunit delta, chloroplastic">
    <location>
        <begin position="1"/>
        <end position="179"/>
    </location>
</feature>